<feature type="chain" id="PRO_1000190922" description="Ketol-acid reductoisomerase (NADP(+))">
    <location>
        <begin position="1"/>
        <end position="338"/>
    </location>
</feature>
<feature type="domain" description="KARI N-terminal Rossmann" evidence="2">
    <location>
        <begin position="1"/>
        <end position="181"/>
    </location>
</feature>
<feature type="domain" description="KARI C-terminal knotted" evidence="3">
    <location>
        <begin position="182"/>
        <end position="327"/>
    </location>
</feature>
<feature type="active site" evidence="1">
    <location>
        <position position="107"/>
    </location>
</feature>
<feature type="binding site" evidence="1">
    <location>
        <begin position="24"/>
        <end position="27"/>
    </location>
    <ligand>
        <name>NADP(+)</name>
        <dbReference type="ChEBI" id="CHEBI:58349"/>
    </ligand>
</feature>
<feature type="binding site" evidence="1">
    <location>
        <position position="47"/>
    </location>
    <ligand>
        <name>NADP(+)</name>
        <dbReference type="ChEBI" id="CHEBI:58349"/>
    </ligand>
</feature>
<feature type="binding site" evidence="1">
    <location>
        <position position="52"/>
    </location>
    <ligand>
        <name>NADP(+)</name>
        <dbReference type="ChEBI" id="CHEBI:58349"/>
    </ligand>
</feature>
<feature type="binding site" evidence="1">
    <location>
        <position position="133"/>
    </location>
    <ligand>
        <name>NADP(+)</name>
        <dbReference type="ChEBI" id="CHEBI:58349"/>
    </ligand>
</feature>
<feature type="binding site" evidence="1">
    <location>
        <position position="190"/>
    </location>
    <ligand>
        <name>Mg(2+)</name>
        <dbReference type="ChEBI" id="CHEBI:18420"/>
        <label>1</label>
    </ligand>
</feature>
<feature type="binding site" evidence="1">
    <location>
        <position position="190"/>
    </location>
    <ligand>
        <name>Mg(2+)</name>
        <dbReference type="ChEBI" id="CHEBI:18420"/>
        <label>2</label>
    </ligand>
</feature>
<feature type="binding site" evidence="1">
    <location>
        <position position="194"/>
    </location>
    <ligand>
        <name>Mg(2+)</name>
        <dbReference type="ChEBI" id="CHEBI:18420"/>
        <label>1</label>
    </ligand>
</feature>
<feature type="binding site" evidence="1">
    <location>
        <position position="226"/>
    </location>
    <ligand>
        <name>Mg(2+)</name>
        <dbReference type="ChEBI" id="CHEBI:18420"/>
        <label>2</label>
    </ligand>
</feature>
<feature type="binding site" evidence="1">
    <location>
        <position position="230"/>
    </location>
    <ligand>
        <name>Mg(2+)</name>
        <dbReference type="ChEBI" id="CHEBI:18420"/>
        <label>2</label>
    </ligand>
</feature>
<feature type="binding site" evidence="1">
    <location>
        <position position="251"/>
    </location>
    <ligand>
        <name>substrate</name>
    </ligand>
</feature>
<accession>A9AJN1</accession>
<dbReference type="EC" id="1.1.1.86" evidence="1"/>
<dbReference type="EMBL" id="CP000868">
    <property type="protein sequence ID" value="ABX14706.1"/>
    <property type="molecule type" value="Genomic_DNA"/>
</dbReference>
<dbReference type="EMBL" id="AP009385">
    <property type="protein sequence ID" value="BAG44144.1"/>
    <property type="molecule type" value="Genomic_DNA"/>
</dbReference>
<dbReference type="RefSeq" id="WP_012213005.1">
    <property type="nucleotide sequence ID" value="NC_010084.1"/>
</dbReference>
<dbReference type="SMR" id="A9AJN1"/>
<dbReference type="STRING" id="395019.BMULJ_02249"/>
<dbReference type="KEGG" id="bmj:BMULJ_02249"/>
<dbReference type="KEGG" id="bmu:Bmul_1015"/>
<dbReference type="eggNOG" id="COG0059">
    <property type="taxonomic scope" value="Bacteria"/>
</dbReference>
<dbReference type="HOGENOM" id="CLU_033821_0_1_4"/>
<dbReference type="UniPathway" id="UPA00047">
    <property type="reaction ID" value="UER00056"/>
</dbReference>
<dbReference type="UniPathway" id="UPA00049">
    <property type="reaction ID" value="UER00060"/>
</dbReference>
<dbReference type="Proteomes" id="UP000008815">
    <property type="component" value="Chromosome 1"/>
</dbReference>
<dbReference type="GO" id="GO:0005829">
    <property type="term" value="C:cytosol"/>
    <property type="evidence" value="ECO:0007669"/>
    <property type="project" value="TreeGrafter"/>
</dbReference>
<dbReference type="GO" id="GO:0004455">
    <property type="term" value="F:ketol-acid reductoisomerase activity"/>
    <property type="evidence" value="ECO:0007669"/>
    <property type="project" value="UniProtKB-UniRule"/>
</dbReference>
<dbReference type="GO" id="GO:0000287">
    <property type="term" value="F:magnesium ion binding"/>
    <property type="evidence" value="ECO:0007669"/>
    <property type="project" value="UniProtKB-UniRule"/>
</dbReference>
<dbReference type="GO" id="GO:0050661">
    <property type="term" value="F:NADP binding"/>
    <property type="evidence" value="ECO:0007669"/>
    <property type="project" value="InterPro"/>
</dbReference>
<dbReference type="GO" id="GO:0009097">
    <property type="term" value="P:isoleucine biosynthetic process"/>
    <property type="evidence" value="ECO:0007669"/>
    <property type="project" value="UniProtKB-UniRule"/>
</dbReference>
<dbReference type="GO" id="GO:0009099">
    <property type="term" value="P:L-valine biosynthetic process"/>
    <property type="evidence" value="ECO:0007669"/>
    <property type="project" value="UniProtKB-UniRule"/>
</dbReference>
<dbReference type="FunFam" id="3.40.50.720:FF:000023">
    <property type="entry name" value="Ketol-acid reductoisomerase (NADP(+))"/>
    <property type="match status" value="1"/>
</dbReference>
<dbReference type="Gene3D" id="6.10.240.10">
    <property type="match status" value="1"/>
</dbReference>
<dbReference type="Gene3D" id="3.40.50.720">
    <property type="entry name" value="NAD(P)-binding Rossmann-like Domain"/>
    <property type="match status" value="1"/>
</dbReference>
<dbReference type="HAMAP" id="MF_00435">
    <property type="entry name" value="IlvC"/>
    <property type="match status" value="1"/>
</dbReference>
<dbReference type="InterPro" id="IPR008927">
    <property type="entry name" value="6-PGluconate_DH-like_C_sf"/>
</dbReference>
<dbReference type="InterPro" id="IPR013023">
    <property type="entry name" value="KARI"/>
</dbReference>
<dbReference type="InterPro" id="IPR000506">
    <property type="entry name" value="KARI_C"/>
</dbReference>
<dbReference type="InterPro" id="IPR013116">
    <property type="entry name" value="KARI_N"/>
</dbReference>
<dbReference type="InterPro" id="IPR014359">
    <property type="entry name" value="KARI_prok"/>
</dbReference>
<dbReference type="InterPro" id="IPR036291">
    <property type="entry name" value="NAD(P)-bd_dom_sf"/>
</dbReference>
<dbReference type="NCBIfam" id="TIGR00465">
    <property type="entry name" value="ilvC"/>
    <property type="match status" value="1"/>
</dbReference>
<dbReference type="NCBIfam" id="NF004017">
    <property type="entry name" value="PRK05479.1"/>
    <property type="match status" value="1"/>
</dbReference>
<dbReference type="NCBIfam" id="NF009940">
    <property type="entry name" value="PRK13403.1"/>
    <property type="match status" value="1"/>
</dbReference>
<dbReference type="PANTHER" id="PTHR21371">
    <property type="entry name" value="KETOL-ACID REDUCTOISOMERASE, MITOCHONDRIAL"/>
    <property type="match status" value="1"/>
</dbReference>
<dbReference type="PANTHER" id="PTHR21371:SF1">
    <property type="entry name" value="KETOL-ACID REDUCTOISOMERASE, MITOCHONDRIAL"/>
    <property type="match status" value="1"/>
</dbReference>
<dbReference type="Pfam" id="PF01450">
    <property type="entry name" value="KARI_C"/>
    <property type="match status" value="1"/>
</dbReference>
<dbReference type="Pfam" id="PF07991">
    <property type="entry name" value="KARI_N"/>
    <property type="match status" value="1"/>
</dbReference>
<dbReference type="PIRSF" id="PIRSF000116">
    <property type="entry name" value="IlvC_gammaproteo"/>
    <property type="match status" value="1"/>
</dbReference>
<dbReference type="SUPFAM" id="SSF48179">
    <property type="entry name" value="6-phosphogluconate dehydrogenase C-terminal domain-like"/>
    <property type="match status" value="1"/>
</dbReference>
<dbReference type="SUPFAM" id="SSF51735">
    <property type="entry name" value="NAD(P)-binding Rossmann-fold domains"/>
    <property type="match status" value="1"/>
</dbReference>
<dbReference type="PROSITE" id="PS51851">
    <property type="entry name" value="KARI_C"/>
    <property type="match status" value="1"/>
</dbReference>
<dbReference type="PROSITE" id="PS51850">
    <property type="entry name" value="KARI_N"/>
    <property type="match status" value="1"/>
</dbReference>
<proteinExistence type="inferred from homology"/>
<sequence length="338" mass="36309">MNVFYDKDADLSLIKGKQVTIIGYGSQGHAHALNLKDSGVNVTVGLRKGGASWSKAENAGLAVKEVAEAVKGADVVMMLLPDEQIADVYAKEVHANIKQGAALAFAHGFNVHYGQVIPRADLDVIMIAPKAPGHTVRGTYSQGGGVPHLIAVAQNKSGAARDIALSYAAANGGGRAGIIETNFREETETDLFGEQAVLCGGTVELIKAGFETLVEAGYAPEMAYFECLHELKLIVDLIYEGGIANMNYSISNNAEYGEYVTGPRVVTEETKKAMKQCLTDIQTGEYAKSFILENKAAAPTLQSRRRLTAEHQIEQVGAKLRAMMPWIAKNKLVDQTKN</sequence>
<comment type="function">
    <text evidence="1">Involved in the biosynthesis of branched-chain amino acids (BCAA). Catalyzes an alkyl-migration followed by a ketol-acid reduction of (S)-2-acetolactate (S2AL) to yield (R)-2,3-dihydroxy-isovalerate. In the isomerase reaction, S2AL is rearranged via a Mg-dependent methyl migration to produce 3-hydroxy-3-methyl-2-ketobutyrate (HMKB). In the reductase reaction, this 2-ketoacid undergoes a metal-dependent reduction by NADPH to yield (R)-2,3-dihydroxy-isovalerate.</text>
</comment>
<comment type="catalytic activity">
    <reaction evidence="1">
        <text>(2R)-2,3-dihydroxy-3-methylbutanoate + NADP(+) = (2S)-2-acetolactate + NADPH + H(+)</text>
        <dbReference type="Rhea" id="RHEA:22068"/>
        <dbReference type="ChEBI" id="CHEBI:15378"/>
        <dbReference type="ChEBI" id="CHEBI:49072"/>
        <dbReference type="ChEBI" id="CHEBI:57783"/>
        <dbReference type="ChEBI" id="CHEBI:58349"/>
        <dbReference type="ChEBI" id="CHEBI:58476"/>
        <dbReference type="EC" id="1.1.1.86"/>
    </reaction>
</comment>
<comment type="catalytic activity">
    <reaction evidence="1">
        <text>(2R,3R)-2,3-dihydroxy-3-methylpentanoate + NADP(+) = (S)-2-ethyl-2-hydroxy-3-oxobutanoate + NADPH + H(+)</text>
        <dbReference type="Rhea" id="RHEA:13493"/>
        <dbReference type="ChEBI" id="CHEBI:15378"/>
        <dbReference type="ChEBI" id="CHEBI:49256"/>
        <dbReference type="ChEBI" id="CHEBI:49258"/>
        <dbReference type="ChEBI" id="CHEBI:57783"/>
        <dbReference type="ChEBI" id="CHEBI:58349"/>
        <dbReference type="EC" id="1.1.1.86"/>
    </reaction>
</comment>
<comment type="cofactor">
    <cofactor evidence="1">
        <name>Mg(2+)</name>
        <dbReference type="ChEBI" id="CHEBI:18420"/>
    </cofactor>
    <text evidence="1">Binds 2 magnesium ions per subunit.</text>
</comment>
<comment type="pathway">
    <text evidence="1">Amino-acid biosynthesis; L-isoleucine biosynthesis; L-isoleucine from 2-oxobutanoate: step 2/4.</text>
</comment>
<comment type="pathway">
    <text evidence="1">Amino-acid biosynthesis; L-valine biosynthesis; L-valine from pyruvate: step 2/4.</text>
</comment>
<comment type="similarity">
    <text evidence="1">Belongs to the ketol-acid reductoisomerase family.</text>
</comment>
<protein>
    <recommendedName>
        <fullName evidence="1">Ketol-acid reductoisomerase (NADP(+))</fullName>
        <shortName evidence="1">KARI</shortName>
        <ecNumber evidence="1">1.1.1.86</ecNumber>
    </recommendedName>
    <alternativeName>
        <fullName evidence="1">Acetohydroxy-acid isomeroreductase</fullName>
        <shortName evidence="1">AHIR</shortName>
    </alternativeName>
    <alternativeName>
        <fullName evidence="1">Alpha-keto-beta-hydroxylacyl reductoisomerase</fullName>
    </alternativeName>
    <alternativeName>
        <fullName evidence="1">Ketol-acid reductoisomerase type 1</fullName>
    </alternativeName>
    <alternativeName>
        <fullName evidence="1">Ketol-acid reductoisomerase type I</fullName>
    </alternativeName>
</protein>
<keyword id="KW-0028">Amino-acid biosynthesis</keyword>
<keyword id="KW-0100">Branched-chain amino acid biosynthesis</keyword>
<keyword id="KW-0460">Magnesium</keyword>
<keyword id="KW-0479">Metal-binding</keyword>
<keyword id="KW-0521">NADP</keyword>
<keyword id="KW-0560">Oxidoreductase</keyword>
<keyword id="KW-1185">Reference proteome</keyword>
<reference key="1">
    <citation type="submission" date="2007-10" db="EMBL/GenBank/DDBJ databases">
        <title>Complete sequence of chromosome 1 of Burkholderia multivorans ATCC 17616.</title>
        <authorList>
            <person name="Copeland A."/>
            <person name="Lucas S."/>
            <person name="Lapidus A."/>
            <person name="Barry K."/>
            <person name="Glavina del Rio T."/>
            <person name="Dalin E."/>
            <person name="Tice H."/>
            <person name="Pitluck S."/>
            <person name="Chain P."/>
            <person name="Malfatti S."/>
            <person name="Shin M."/>
            <person name="Vergez L."/>
            <person name="Schmutz J."/>
            <person name="Larimer F."/>
            <person name="Land M."/>
            <person name="Hauser L."/>
            <person name="Kyrpides N."/>
            <person name="Kim E."/>
            <person name="Tiedje J."/>
            <person name="Richardson P."/>
        </authorList>
    </citation>
    <scope>NUCLEOTIDE SEQUENCE [LARGE SCALE GENOMIC DNA]</scope>
    <source>
        <strain>ATCC 17616 / 249</strain>
    </source>
</reference>
<reference key="2">
    <citation type="submission" date="2007-04" db="EMBL/GenBank/DDBJ databases">
        <title>Complete genome sequence of Burkholderia multivorans ATCC 17616.</title>
        <authorList>
            <person name="Ohtsubo Y."/>
            <person name="Yamashita A."/>
            <person name="Kurokawa K."/>
            <person name="Takami H."/>
            <person name="Yuhara S."/>
            <person name="Nishiyama E."/>
            <person name="Endo R."/>
            <person name="Miyazaki R."/>
            <person name="Ono A."/>
            <person name="Yano K."/>
            <person name="Ito M."/>
            <person name="Sota M."/>
            <person name="Yuji N."/>
            <person name="Hattori M."/>
            <person name="Tsuda M."/>
        </authorList>
    </citation>
    <scope>NUCLEOTIDE SEQUENCE [LARGE SCALE GENOMIC DNA]</scope>
    <source>
        <strain>ATCC 17616 / 249</strain>
    </source>
</reference>
<name>ILVC_BURM1</name>
<gene>
    <name evidence="1" type="primary">ilvC</name>
    <name type="ordered locus">Bmul_1015</name>
    <name type="ordered locus">BMULJ_02249</name>
</gene>
<organism>
    <name type="scientific">Burkholderia multivorans (strain ATCC 17616 / 249)</name>
    <dbReference type="NCBI Taxonomy" id="395019"/>
    <lineage>
        <taxon>Bacteria</taxon>
        <taxon>Pseudomonadati</taxon>
        <taxon>Pseudomonadota</taxon>
        <taxon>Betaproteobacteria</taxon>
        <taxon>Burkholderiales</taxon>
        <taxon>Burkholderiaceae</taxon>
        <taxon>Burkholderia</taxon>
        <taxon>Burkholderia cepacia complex</taxon>
    </lineage>
</organism>
<evidence type="ECO:0000255" key="1">
    <source>
        <dbReference type="HAMAP-Rule" id="MF_00435"/>
    </source>
</evidence>
<evidence type="ECO:0000255" key="2">
    <source>
        <dbReference type="PROSITE-ProRule" id="PRU01197"/>
    </source>
</evidence>
<evidence type="ECO:0000255" key="3">
    <source>
        <dbReference type="PROSITE-ProRule" id="PRU01198"/>
    </source>
</evidence>